<dbReference type="EC" id="4.3.1.32" evidence="1"/>
<dbReference type="EMBL" id="BA000039">
    <property type="protein sequence ID" value="BAC09067.1"/>
    <property type="molecule type" value="Genomic_DNA"/>
</dbReference>
<dbReference type="RefSeq" id="NP_682305.1">
    <property type="nucleotide sequence ID" value="NC_004113.1"/>
</dbReference>
<dbReference type="RefSeq" id="WP_011057355.1">
    <property type="nucleotide sequence ID" value="NC_004113.1"/>
</dbReference>
<dbReference type="SMR" id="Q8DIR6"/>
<dbReference type="STRING" id="197221.gene:10748115"/>
<dbReference type="EnsemblBacteria" id="BAC09067">
    <property type="protein sequence ID" value="BAC09067"/>
    <property type="gene ID" value="BAC09067"/>
</dbReference>
<dbReference type="KEGG" id="tel:tll1515"/>
<dbReference type="PATRIC" id="fig|197221.4.peg.1591"/>
<dbReference type="eggNOG" id="COG1060">
    <property type="taxonomic scope" value="Bacteria"/>
</dbReference>
<dbReference type="UniPathway" id="UPA00072"/>
<dbReference type="Proteomes" id="UP000000440">
    <property type="component" value="Chromosome"/>
</dbReference>
<dbReference type="GO" id="GO:0051539">
    <property type="term" value="F:4 iron, 4 sulfur cluster binding"/>
    <property type="evidence" value="ECO:0007669"/>
    <property type="project" value="UniProtKB-KW"/>
</dbReference>
<dbReference type="GO" id="GO:0044689">
    <property type="term" value="F:7,8-didemethyl-8-hydroxy-5-deazariboflavin synthase activity"/>
    <property type="evidence" value="ECO:0007669"/>
    <property type="project" value="UniProtKB-EC"/>
</dbReference>
<dbReference type="GO" id="GO:0005506">
    <property type="term" value="F:iron ion binding"/>
    <property type="evidence" value="ECO:0007669"/>
    <property type="project" value="UniProtKB-UniRule"/>
</dbReference>
<dbReference type="GO" id="GO:0016765">
    <property type="term" value="F:transferase activity, transferring alkyl or aryl (other than methyl) groups"/>
    <property type="evidence" value="ECO:0007669"/>
    <property type="project" value="InterPro"/>
</dbReference>
<dbReference type="CDD" id="cd01335">
    <property type="entry name" value="Radical_SAM"/>
    <property type="match status" value="1"/>
</dbReference>
<dbReference type="Gene3D" id="3.20.20.70">
    <property type="entry name" value="Aldolase class I"/>
    <property type="match status" value="1"/>
</dbReference>
<dbReference type="HAMAP" id="MF_01611">
    <property type="entry name" value="FO_synth_sub1"/>
    <property type="match status" value="1"/>
</dbReference>
<dbReference type="InterPro" id="IPR013785">
    <property type="entry name" value="Aldolase_TIM"/>
</dbReference>
<dbReference type="InterPro" id="IPR019939">
    <property type="entry name" value="CofG_family"/>
</dbReference>
<dbReference type="InterPro" id="IPR006638">
    <property type="entry name" value="Elp3/MiaA/NifB-like_rSAM"/>
</dbReference>
<dbReference type="InterPro" id="IPR034405">
    <property type="entry name" value="F420"/>
</dbReference>
<dbReference type="InterPro" id="IPR007197">
    <property type="entry name" value="rSAM"/>
</dbReference>
<dbReference type="NCBIfam" id="TIGR03550">
    <property type="entry name" value="F420_cofG"/>
    <property type="match status" value="1"/>
</dbReference>
<dbReference type="NCBIfam" id="NF004884">
    <property type="entry name" value="PRK06245.1"/>
    <property type="match status" value="1"/>
</dbReference>
<dbReference type="PANTHER" id="PTHR43076:SF15">
    <property type="entry name" value="7,8-DIDEMETHYL-8-HYDROXY-5-DEAZARIBOFLAVIN SYNTHASE"/>
    <property type="match status" value="1"/>
</dbReference>
<dbReference type="PANTHER" id="PTHR43076">
    <property type="entry name" value="FO SYNTHASE (COFH)"/>
    <property type="match status" value="1"/>
</dbReference>
<dbReference type="Pfam" id="PF04055">
    <property type="entry name" value="Radical_SAM"/>
    <property type="match status" value="1"/>
</dbReference>
<dbReference type="SFLD" id="SFLDF00294">
    <property type="entry name" value="7_8-didemethyl-8-hydroxy-5-dea"/>
    <property type="match status" value="1"/>
</dbReference>
<dbReference type="SFLD" id="SFLDG01388">
    <property type="entry name" value="7_8-didemethyl-8-hydroxy-5-dea"/>
    <property type="match status" value="1"/>
</dbReference>
<dbReference type="SMART" id="SM00729">
    <property type="entry name" value="Elp3"/>
    <property type="match status" value="1"/>
</dbReference>
<dbReference type="SUPFAM" id="SSF102114">
    <property type="entry name" value="Radical SAM enzymes"/>
    <property type="match status" value="1"/>
</dbReference>
<dbReference type="PROSITE" id="PS51918">
    <property type="entry name" value="RADICAL_SAM"/>
    <property type="match status" value="1"/>
</dbReference>
<gene>
    <name evidence="1" type="primary">cofG</name>
    <name type="ordered locus">tll1515</name>
</gene>
<sequence>MGDRTITYSPAFTLVPTYECFNRCTYCNFRQDIGTRGWLTLKAAAKQLAELDPQRVREILILSGEVAPNSPQRSKWLERLYDLAALALDQGFLPHTNAGPLTRAEMTALKAVNVSMGLMLEQLTPKLLQGVHRHAPSKDPQLRLHQLEQAGELGIPFTTGLLLGIGEAPQDWAETLTAIAEGHRRWGHIQEVILQPHSPGQQQAERLPPFDLKQLPQVVQWARSLLPEDITIQIPANLVTEPEVFRACLEAGARDLGGIVPLDHVNPDYPHTDLAVLKEQLQAWGWELVPRLPVYPQFVDWLPPPLKEKVKEIPV</sequence>
<name>COFG_THEVB</name>
<protein>
    <recommendedName>
        <fullName evidence="1">7,8-didemethyl-8-hydroxy-5-deazariboflavin synthase</fullName>
        <ecNumber evidence="1">4.3.1.32</ecNumber>
    </recommendedName>
    <alternativeName>
        <fullName evidence="1">FO synthase subunit 1</fullName>
    </alternativeName>
</protein>
<accession>Q8DIR6</accession>
<proteinExistence type="inferred from homology"/>
<keyword id="KW-0004">4Fe-4S</keyword>
<keyword id="KW-0408">Iron</keyword>
<keyword id="KW-0411">Iron-sulfur</keyword>
<keyword id="KW-0456">Lyase</keyword>
<keyword id="KW-0479">Metal-binding</keyword>
<keyword id="KW-1185">Reference proteome</keyword>
<keyword id="KW-0949">S-adenosyl-L-methionine</keyword>
<evidence type="ECO:0000255" key="1">
    <source>
        <dbReference type="HAMAP-Rule" id="MF_01611"/>
    </source>
</evidence>
<evidence type="ECO:0000255" key="2">
    <source>
        <dbReference type="PROSITE-ProRule" id="PRU01266"/>
    </source>
</evidence>
<reference key="1">
    <citation type="journal article" date="2002" name="DNA Res.">
        <title>Complete genome structure of the thermophilic cyanobacterium Thermosynechococcus elongatus BP-1.</title>
        <authorList>
            <person name="Nakamura Y."/>
            <person name="Kaneko T."/>
            <person name="Sato S."/>
            <person name="Ikeuchi M."/>
            <person name="Katoh H."/>
            <person name="Sasamoto S."/>
            <person name="Watanabe A."/>
            <person name="Iriguchi M."/>
            <person name="Kawashima K."/>
            <person name="Kimura T."/>
            <person name="Kishida Y."/>
            <person name="Kiyokawa C."/>
            <person name="Kohara M."/>
            <person name="Matsumoto M."/>
            <person name="Matsuno A."/>
            <person name="Nakazaki N."/>
            <person name="Shimpo S."/>
            <person name="Sugimoto M."/>
            <person name="Takeuchi C."/>
            <person name="Yamada M."/>
            <person name="Tabata S."/>
        </authorList>
    </citation>
    <scope>NUCLEOTIDE SEQUENCE [LARGE SCALE GENOMIC DNA]</scope>
    <source>
        <strain>NIES-2133 / IAM M-273 / BP-1</strain>
    </source>
</reference>
<feature type="chain" id="PRO_0000147757" description="7,8-didemethyl-8-hydroxy-5-deazariboflavin synthase">
    <location>
        <begin position="1"/>
        <end position="315"/>
    </location>
</feature>
<feature type="domain" description="Radical SAM core" evidence="2">
    <location>
        <begin position="6"/>
        <end position="237"/>
    </location>
</feature>
<feature type="binding site" evidence="1">
    <location>
        <position position="20"/>
    </location>
    <ligand>
        <name>[4Fe-4S] cluster</name>
        <dbReference type="ChEBI" id="CHEBI:49883"/>
        <note>4Fe-4S-S-AdoMet</note>
    </ligand>
</feature>
<feature type="binding site" evidence="1">
    <location>
        <position position="24"/>
    </location>
    <ligand>
        <name>[4Fe-4S] cluster</name>
        <dbReference type="ChEBI" id="CHEBI:49883"/>
        <note>4Fe-4S-S-AdoMet</note>
    </ligand>
</feature>
<feature type="binding site" evidence="1">
    <location>
        <position position="27"/>
    </location>
    <ligand>
        <name>[4Fe-4S] cluster</name>
        <dbReference type="ChEBI" id="CHEBI:49883"/>
        <note>4Fe-4S-S-AdoMet</note>
    </ligand>
</feature>
<comment type="function">
    <text evidence="1">Catalyzes the radical-mediated synthesis of 7,8-didemethyl-8-hydroxy-5-deazariboflavin from 5-amino-5-(4-hydroxybenzyl)-6-(D-ribitylimino)-5,6-dihydrouracil.</text>
</comment>
<comment type="catalytic activity">
    <reaction evidence="1">
        <text>5-amino-5-(4-hydroxybenzyl)-6-(D-ribitylimino)-5,6-dihydrouracil + S-adenosyl-L-methionine = 7,8-didemethyl-8-hydroxy-5-deazariboflavin + 5'-deoxyadenosine + L-methionine + NH4(+) + H(+)</text>
        <dbReference type="Rhea" id="RHEA:55204"/>
        <dbReference type="ChEBI" id="CHEBI:15378"/>
        <dbReference type="ChEBI" id="CHEBI:17319"/>
        <dbReference type="ChEBI" id="CHEBI:28938"/>
        <dbReference type="ChEBI" id="CHEBI:57844"/>
        <dbReference type="ChEBI" id="CHEBI:59789"/>
        <dbReference type="ChEBI" id="CHEBI:59904"/>
        <dbReference type="ChEBI" id="CHEBI:85936"/>
        <dbReference type="EC" id="4.3.1.32"/>
    </reaction>
</comment>
<comment type="cofactor">
    <cofactor evidence="1">
        <name>[4Fe-4S] cluster</name>
        <dbReference type="ChEBI" id="CHEBI:49883"/>
    </cofactor>
    <text evidence="1">Binds 1 [4Fe-4S] cluster. The cluster is coordinated with 3 cysteines and an exchangeable S-adenosyl-L-methionine.</text>
</comment>
<comment type="pathway">
    <text evidence="1">Cofactor biosynthesis; coenzyme F0 biosynthesis.</text>
</comment>
<comment type="subunit">
    <text evidence="1">Consists of two subunits, CofG and CofH.</text>
</comment>
<comment type="similarity">
    <text evidence="1">Belongs to the radical SAM superfamily. CofG family.</text>
</comment>
<organism>
    <name type="scientific">Thermosynechococcus vestitus (strain NIES-2133 / IAM M-273 / BP-1)</name>
    <dbReference type="NCBI Taxonomy" id="197221"/>
    <lineage>
        <taxon>Bacteria</taxon>
        <taxon>Bacillati</taxon>
        <taxon>Cyanobacteriota</taxon>
        <taxon>Cyanophyceae</taxon>
        <taxon>Acaryochloridales</taxon>
        <taxon>Thermosynechococcaceae</taxon>
        <taxon>Thermosynechococcus</taxon>
    </lineage>
</organism>